<keyword id="KW-0687">Ribonucleoprotein</keyword>
<keyword id="KW-0689">Ribosomal protein</keyword>
<sequence>MKPNIHPPYRTVVFHDTSADAYFTVGSTIATERTIERDGQTYPYVTLDISSASHPYYTGKQKEFAKEGSTARFHQRFGSFLTKKTN</sequence>
<evidence type="ECO:0000255" key="1">
    <source>
        <dbReference type="HAMAP-Rule" id="MF_00502"/>
    </source>
</evidence>
<evidence type="ECO:0000305" key="2"/>
<protein>
    <recommendedName>
        <fullName evidence="1">Large ribosomal subunit protein bL31B</fullName>
    </recommendedName>
    <alternativeName>
        <fullName evidence="2">50S ribosomal protein L31 type B</fullName>
    </alternativeName>
</protein>
<accession>Q66DR1</accession>
<feature type="chain" id="PRO_0000173290" description="Large ribosomal subunit protein bL31B">
    <location>
        <begin position="1"/>
        <end position="86"/>
    </location>
</feature>
<name>RL31B_YERPS</name>
<dbReference type="EMBL" id="BX936398">
    <property type="protein sequence ID" value="CAH20222.1"/>
    <property type="molecule type" value="Genomic_DNA"/>
</dbReference>
<dbReference type="RefSeq" id="WP_002208617.1">
    <property type="nucleotide sequence ID" value="NZ_CP009712.1"/>
</dbReference>
<dbReference type="SMR" id="Q66DR1"/>
<dbReference type="KEGG" id="ypo:BZ17_1565"/>
<dbReference type="KEGG" id="yps:YPTB0982"/>
<dbReference type="PATRIC" id="fig|273123.14.peg.1661"/>
<dbReference type="Proteomes" id="UP000001011">
    <property type="component" value="Chromosome"/>
</dbReference>
<dbReference type="GO" id="GO:1990904">
    <property type="term" value="C:ribonucleoprotein complex"/>
    <property type="evidence" value="ECO:0007669"/>
    <property type="project" value="UniProtKB-KW"/>
</dbReference>
<dbReference type="GO" id="GO:0005840">
    <property type="term" value="C:ribosome"/>
    <property type="evidence" value="ECO:0007669"/>
    <property type="project" value="UniProtKB-KW"/>
</dbReference>
<dbReference type="GO" id="GO:0003735">
    <property type="term" value="F:structural constituent of ribosome"/>
    <property type="evidence" value="ECO:0007669"/>
    <property type="project" value="InterPro"/>
</dbReference>
<dbReference type="GO" id="GO:0006412">
    <property type="term" value="P:translation"/>
    <property type="evidence" value="ECO:0007669"/>
    <property type="project" value="UniProtKB-UniRule"/>
</dbReference>
<dbReference type="Gene3D" id="4.10.830.30">
    <property type="entry name" value="Ribosomal protein L31"/>
    <property type="match status" value="1"/>
</dbReference>
<dbReference type="HAMAP" id="MF_00502">
    <property type="entry name" value="Ribosomal_bL31_2"/>
    <property type="match status" value="1"/>
</dbReference>
<dbReference type="InterPro" id="IPR034704">
    <property type="entry name" value="Ribosomal_bL28/bL31-like_sf"/>
</dbReference>
<dbReference type="InterPro" id="IPR002150">
    <property type="entry name" value="Ribosomal_bL31"/>
</dbReference>
<dbReference type="InterPro" id="IPR027493">
    <property type="entry name" value="Ribosomal_bL31_B"/>
</dbReference>
<dbReference type="InterPro" id="IPR042105">
    <property type="entry name" value="Ribosomal_bL31_sf"/>
</dbReference>
<dbReference type="NCBIfam" id="TIGR00105">
    <property type="entry name" value="L31"/>
    <property type="match status" value="1"/>
</dbReference>
<dbReference type="NCBIfam" id="NF002462">
    <property type="entry name" value="PRK01678.1"/>
    <property type="match status" value="1"/>
</dbReference>
<dbReference type="PANTHER" id="PTHR33280">
    <property type="entry name" value="50S RIBOSOMAL PROTEIN L31, CHLOROPLASTIC"/>
    <property type="match status" value="1"/>
</dbReference>
<dbReference type="PANTHER" id="PTHR33280:SF1">
    <property type="entry name" value="LARGE RIBOSOMAL SUBUNIT PROTEIN BL31C"/>
    <property type="match status" value="1"/>
</dbReference>
<dbReference type="Pfam" id="PF01197">
    <property type="entry name" value="Ribosomal_L31"/>
    <property type="match status" value="1"/>
</dbReference>
<dbReference type="PRINTS" id="PR01249">
    <property type="entry name" value="RIBOSOMALL31"/>
</dbReference>
<dbReference type="SUPFAM" id="SSF143800">
    <property type="entry name" value="L28p-like"/>
    <property type="match status" value="1"/>
</dbReference>
<organism>
    <name type="scientific">Yersinia pseudotuberculosis serotype I (strain IP32953)</name>
    <dbReference type="NCBI Taxonomy" id="273123"/>
    <lineage>
        <taxon>Bacteria</taxon>
        <taxon>Pseudomonadati</taxon>
        <taxon>Pseudomonadota</taxon>
        <taxon>Gammaproteobacteria</taxon>
        <taxon>Enterobacterales</taxon>
        <taxon>Yersiniaceae</taxon>
        <taxon>Yersinia</taxon>
    </lineage>
</organism>
<comment type="subunit">
    <text evidence="1">Part of the 50S ribosomal subunit.</text>
</comment>
<comment type="similarity">
    <text evidence="1">Belongs to the bacterial ribosomal protein bL31 family. Type B subfamily.</text>
</comment>
<proteinExistence type="inferred from homology"/>
<reference key="1">
    <citation type="journal article" date="2004" name="Proc. Natl. Acad. Sci. U.S.A.">
        <title>Insights into the evolution of Yersinia pestis through whole-genome comparison with Yersinia pseudotuberculosis.</title>
        <authorList>
            <person name="Chain P.S.G."/>
            <person name="Carniel E."/>
            <person name="Larimer F.W."/>
            <person name="Lamerdin J."/>
            <person name="Stoutland P.O."/>
            <person name="Regala W.M."/>
            <person name="Georgescu A.M."/>
            <person name="Vergez L.M."/>
            <person name="Land M.L."/>
            <person name="Motin V.L."/>
            <person name="Brubaker R.R."/>
            <person name="Fowler J."/>
            <person name="Hinnebusch J."/>
            <person name="Marceau M."/>
            <person name="Medigue C."/>
            <person name="Simonet M."/>
            <person name="Chenal-Francisque V."/>
            <person name="Souza B."/>
            <person name="Dacheux D."/>
            <person name="Elliott J.M."/>
            <person name="Derbise A."/>
            <person name="Hauser L.J."/>
            <person name="Garcia E."/>
        </authorList>
    </citation>
    <scope>NUCLEOTIDE SEQUENCE [LARGE SCALE GENOMIC DNA]</scope>
    <source>
        <strain>IP32953</strain>
    </source>
</reference>
<gene>
    <name evidence="1" type="primary">rpmE2</name>
    <name type="ordered locus">YPTB0982</name>
</gene>